<reference evidence="10 32" key="1">
    <citation type="journal article" date="2000" name="Genetics">
        <title>Extensive amino acid polymorphism at the pgm locus is consistent with adaptive protein evolution in Drosophila melanogaster.</title>
        <authorList>
            <person name="Verrelli B.C."/>
            <person name="Eanes W.F."/>
        </authorList>
    </citation>
    <scope>NUCLEOTIDE SEQUENCE [GENOMIC DNA]</scope>
    <scope>VARIANTS THR-9; VAL-50; ILE-52; VAL-52; TYR-64; ALA-109; LYS-197; LYS-235; LEU-240; ASP-245; SER-338; MET-341; LYS-346; SER-465; LEU-484; THR-530 AND PHE-540</scope>
    <source>
        <strain evidence="29">B4039</strain>
        <strain evidence="13">dpf95_100.3</strain>
        <strain evidence="41">dpf95_13.0</strain>
        <strain evidence="16">dpf95_2.0</strain>
        <strain evidence="33">dpf95_2.1</strain>
        <strain evidence="38">dpf95_23.1</strain>
        <strain evidence="37">dpf95_29.3</strain>
        <strain evidence="40">dpf95_3.0</strain>
        <strain evidence="36">dpf95_36.4</strain>
        <strain evidence="26">dpf95_38.3</strain>
        <strain evidence="27">dpf95_4.2</strain>
        <strain evidence="39">dpf95_4.3</strain>
        <strain evidence="25">dpf95_44.3</strain>
        <strain evidence="15">dpf95_48.2</strain>
        <strain evidence="17">dpf95_53.1</strain>
        <strain evidence="34">dpf95_54.0</strain>
        <strain evidence="23">dpf95_56.1</strain>
        <strain evidence="43">dpf95_56.2</strain>
        <strain evidence="32">dpf95_73.1</strain>
        <strain evidence="31">dpf95_77.4</strain>
        <strain evidence="35">dpf95_84.3</strain>
        <strain evidence="24">dpf95_85.1</strain>
        <strain evidence="30">dpf95_90.2</strain>
        <strain evidence="28">dpf95_94.1</strain>
        <strain evidence="18">hfl97_1.0</strain>
        <strain evidence="19">hfl97_13.0</strain>
        <strain evidence="20">hfl97_15.0</strain>
        <strain evidence="21">hfl97_50.0</strain>
        <strain evidence="14">hfl97_93.0</strain>
        <strain evidence="22">md90_709.1</strain>
        <strain evidence="42">sc96_5.3</strain>
        <strain evidence="54">zim_11S</strain>
        <strain evidence="50">zim_15S</strain>
        <strain evidence="46">zim_23H</strain>
        <strain evidence="53">zim_24S</strain>
        <strain evidence="44">zim_26H</strain>
        <strain evidence="52">zim_35S</strain>
        <strain evidence="48">zim_36H</strain>
        <strain evidence="47">zim_38H</strain>
        <strain evidence="49">zim_39H</strain>
        <strain evidence="45">zim_44H</strain>
        <strain evidence="55">zim_48S</strain>
        <strain evidence="56">zim_49S</strain>
        <strain evidence="51">zim_51S</strain>
    </source>
</reference>
<reference evidence="10 57" key="2">
    <citation type="journal article" date="2002" name="Genome Biol.">
        <title>Doxycycline-induced expression of sense and inverted-repeat constructs modulates phosphogluconate mutase (Pgm) gene expression in adult Drosophila melanogaster.</title>
        <authorList>
            <person name="Allikian M.J."/>
            <person name="Deckert-Cruz D."/>
            <person name="Rose M.R."/>
            <person name="Landis G.N."/>
            <person name="Tower J."/>
        </authorList>
    </citation>
    <scope>NUCLEOTIDE SEQUENCE [MRNA]</scope>
    <scope>VARIANTS GLY-6; THR-9; LEU-240 AND ASP-245</scope>
    <source>
        <strain evidence="58">Canton-S</strain>
    </source>
</reference>
<reference evidence="12" key="3">
    <citation type="journal article" date="2000" name="Science">
        <title>The genome sequence of Drosophila melanogaster.</title>
        <authorList>
            <person name="Adams M.D."/>
            <person name="Celniker S.E."/>
            <person name="Holt R.A."/>
            <person name="Evans C.A."/>
            <person name="Gocayne J.D."/>
            <person name="Amanatides P.G."/>
            <person name="Scherer S.E."/>
            <person name="Li P.W."/>
            <person name="Hoskins R.A."/>
            <person name="Galle R.F."/>
            <person name="George R.A."/>
            <person name="Lewis S.E."/>
            <person name="Richards S."/>
            <person name="Ashburner M."/>
            <person name="Henderson S.N."/>
            <person name="Sutton G.G."/>
            <person name="Wortman J.R."/>
            <person name="Yandell M.D."/>
            <person name="Zhang Q."/>
            <person name="Chen L.X."/>
            <person name="Brandon R.C."/>
            <person name="Rogers Y.-H.C."/>
            <person name="Blazej R.G."/>
            <person name="Champe M."/>
            <person name="Pfeiffer B.D."/>
            <person name="Wan K.H."/>
            <person name="Doyle C."/>
            <person name="Baxter E.G."/>
            <person name="Helt G."/>
            <person name="Nelson C.R."/>
            <person name="Miklos G.L.G."/>
            <person name="Abril J.F."/>
            <person name="Agbayani A."/>
            <person name="An H.-J."/>
            <person name="Andrews-Pfannkoch C."/>
            <person name="Baldwin D."/>
            <person name="Ballew R.M."/>
            <person name="Basu A."/>
            <person name="Baxendale J."/>
            <person name="Bayraktaroglu L."/>
            <person name="Beasley E.M."/>
            <person name="Beeson K.Y."/>
            <person name="Benos P.V."/>
            <person name="Berman B.P."/>
            <person name="Bhandari D."/>
            <person name="Bolshakov S."/>
            <person name="Borkova D."/>
            <person name="Botchan M.R."/>
            <person name="Bouck J."/>
            <person name="Brokstein P."/>
            <person name="Brottier P."/>
            <person name="Burtis K.C."/>
            <person name="Busam D.A."/>
            <person name="Butler H."/>
            <person name="Cadieu E."/>
            <person name="Center A."/>
            <person name="Chandra I."/>
            <person name="Cherry J.M."/>
            <person name="Cawley S."/>
            <person name="Dahlke C."/>
            <person name="Davenport L.B."/>
            <person name="Davies P."/>
            <person name="de Pablos B."/>
            <person name="Delcher A."/>
            <person name="Deng Z."/>
            <person name="Mays A.D."/>
            <person name="Dew I."/>
            <person name="Dietz S.M."/>
            <person name="Dodson K."/>
            <person name="Doup L.E."/>
            <person name="Downes M."/>
            <person name="Dugan-Rocha S."/>
            <person name="Dunkov B.C."/>
            <person name="Dunn P."/>
            <person name="Durbin K.J."/>
            <person name="Evangelista C.C."/>
            <person name="Ferraz C."/>
            <person name="Ferriera S."/>
            <person name="Fleischmann W."/>
            <person name="Fosler C."/>
            <person name="Gabrielian A.E."/>
            <person name="Garg N.S."/>
            <person name="Gelbart W.M."/>
            <person name="Glasser K."/>
            <person name="Glodek A."/>
            <person name="Gong F."/>
            <person name="Gorrell J.H."/>
            <person name="Gu Z."/>
            <person name="Guan P."/>
            <person name="Harris M."/>
            <person name="Harris N.L."/>
            <person name="Harvey D.A."/>
            <person name="Heiman T.J."/>
            <person name="Hernandez J.R."/>
            <person name="Houck J."/>
            <person name="Hostin D."/>
            <person name="Houston K.A."/>
            <person name="Howland T.J."/>
            <person name="Wei M.-H."/>
            <person name="Ibegwam C."/>
            <person name="Jalali M."/>
            <person name="Kalush F."/>
            <person name="Karpen G.H."/>
            <person name="Ke Z."/>
            <person name="Kennison J.A."/>
            <person name="Ketchum K.A."/>
            <person name="Kimmel B.E."/>
            <person name="Kodira C.D."/>
            <person name="Kraft C.L."/>
            <person name="Kravitz S."/>
            <person name="Kulp D."/>
            <person name="Lai Z."/>
            <person name="Lasko P."/>
            <person name="Lei Y."/>
            <person name="Levitsky A.A."/>
            <person name="Li J.H."/>
            <person name="Li Z."/>
            <person name="Liang Y."/>
            <person name="Lin X."/>
            <person name="Liu X."/>
            <person name="Mattei B."/>
            <person name="McIntosh T.C."/>
            <person name="McLeod M.P."/>
            <person name="McPherson D."/>
            <person name="Merkulov G."/>
            <person name="Milshina N.V."/>
            <person name="Mobarry C."/>
            <person name="Morris J."/>
            <person name="Moshrefi A."/>
            <person name="Mount S.M."/>
            <person name="Moy M."/>
            <person name="Murphy B."/>
            <person name="Murphy L."/>
            <person name="Muzny D.M."/>
            <person name="Nelson D.L."/>
            <person name="Nelson D.R."/>
            <person name="Nelson K.A."/>
            <person name="Nixon K."/>
            <person name="Nusskern D.R."/>
            <person name="Pacleb J.M."/>
            <person name="Palazzolo M."/>
            <person name="Pittman G.S."/>
            <person name="Pan S."/>
            <person name="Pollard J."/>
            <person name="Puri V."/>
            <person name="Reese M.G."/>
            <person name="Reinert K."/>
            <person name="Remington K."/>
            <person name="Saunders R.D.C."/>
            <person name="Scheeler F."/>
            <person name="Shen H."/>
            <person name="Shue B.C."/>
            <person name="Siden-Kiamos I."/>
            <person name="Simpson M."/>
            <person name="Skupski M.P."/>
            <person name="Smith T.J."/>
            <person name="Spier E."/>
            <person name="Spradling A.C."/>
            <person name="Stapleton M."/>
            <person name="Strong R."/>
            <person name="Sun E."/>
            <person name="Svirskas R."/>
            <person name="Tector C."/>
            <person name="Turner R."/>
            <person name="Venter E."/>
            <person name="Wang A.H."/>
            <person name="Wang X."/>
            <person name="Wang Z.-Y."/>
            <person name="Wassarman D.A."/>
            <person name="Weinstock G.M."/>
            <person name="Weissenbach J."/>
            <person name="Williams S.M."/>
            <person name="Woodage T."/>
            <person name="Worley K.C."/>
            <person name="Wu D."/>
            <person name="Yang S."/>
            <person name="Yao Q.A."/>
            <person name="Ye J."/>
            <person name="Yeh R.-F."/>
            <person name="Zaveri J.S."/>
            <person name="Zhan M."/>
            <person name="Zhang G."/>
            <person name="Zhao Q."/>
            <person name="Zheng L."/>
            <person name="Zheng X.H."/>
            <person name="Zhong F.N."/>
            <person name="Zhong W."/>
            <person name="Zhou X."/>
            <person name="Zhu S.C."/>
            <person name="Zhu X."/>
            <person name="Smith H.O."/>
            <person name="Gibbs R.A."/>
            <person name="Myers E.W."/>
            <person name="Rubin G.M."/>
            <person name="Venter J.C."/>
        </authorList>
    </citation>
    <scope>NUCLEOTIDE SEQUENCE [LARGE SCALE GENOMIC DNA]</scope>
    <source>
        <strain evidence="2">Berkeley</strain>
    </source>
</reference>
<reference evidence="10 12" key="4">
    <citation type="journal article" date="2002" name="Genome Biol.">
        <title>Annotation of the Drosophila melanogaster euchromatic genome: a systematic review.</title>
        <authorList>
            <person name="Misra S."/>
            <person name="Crosby M.A."/>
            <person name="Mungall C.J."/>
            <person name="Matthews B.B."/>
            <person name="Campbell K.S."/>
            <person name="Hradecky P."/>
            <person name="Huang Y."/>
            <person name="Kaminker J.S."/>
            <person name="Millburn G.H."/>
            <person name="Prochnik S.E."/>
            <person name="Smith C.D."/>
            <person name="Tupy J.L."/>
            <person name="Whitfield E.J."/>
            <person name="Bayraktaroglu L."/>
            <person name="Berman B.P."/>
            <person name="Bettencourt B.R."/>
            <person name="Celniker S.E."/>
            <person name="de Grey A.D.N.J."/>
            <person name="Drysdale R.A."/>
            <person name="Harris N.L."/>
            <person name="Richter J."/>
            <person name="Russo S."/>
            <person name="Schroeder A.J."/>
            <person name="Shu S.Q."/>
            <person name="Stapleton M."/>
            <person name="Yamada C."/>
            <person name="Ashburner M."/>
            <person name="Gelbart W.M."/>
            <person name="Rubin G.M."/>
            <person name="Lewis S.E."/>
        </authorList>
    </citation>
    <scope>GENOME REANNOTATION</scope>
    <source>
        <strain>Berkeley</strain>
    </source>
</reference>
<reference evidence="59" key="5">
    <citation type="submission" date="2003-08" db="EMBL/GenBank/DDBJ databases">
        <authorList>
            <person name="Stapleton M."/>
            <person name="Brokstein P."/>
            <person name="Hong L."/>
            <person name="Agbayani A."/>
            <person name="Carlson J.W."/>
            <person name="Champe M."/>
            <person name="Chavez C."/>
            <person name="Dorsett V."/>
            <person name="Dresnek D."/>
            <person name="Farfan D."/>
            <person name="Frise E."/>
            <person name="George R.A."/>
            <person name="Gonzalez M."/>
            <person name="Guarin H."/>
            <person name="Kronmiller B."/>
            <person name="Li P.W."/>
            <person name="Liao G."/>
            <person name="Miranda A."/>
            <person name="Mungall C.J."/>
            <person name="Nunoo J."/>
            <person name="Pacleb J.M."/>
            <person name="Paragas V."/>
            <person name="Park S."/>
            <person name="Patel S."/>
            <person name="Phouanenavong S."/>
            <person name="Wan K.H."/>
            <person name="Yu C."/>
            <person name="Lewis S.E."/>
            <person name="Rubin G.M."/>
            <person name="Celniker S.E."/>
        </authorList>
    </citation>
    <scope>NUCLEOTIDE SEQUENCE [LARGE SCALE MRNA]</scope>
    <source>
        <strain evidence="59">Berkeley</strain>
        <tissue>Embryo</tissue>
    </source>
</reference>
<reference evidence="10" key="6">
    <citation type="journal article" date="1979" name="Biochem. Genet.">
        <title>Properties of the two common electrophoretic variants of phosphoglucomutase in Drosophila melanogaster.</title>
        <authorList>
            <person name="Fucci L."/>
            <person name="Gaudio L."/>
            <person name="Rao R."/>
            <person name="Spano A."/>
            <person name="Carfagna M."/>
        </authorList>
    </citation>
    <scope>FUNCTION</scope>
    <scope>CATALYTIC ACTIVITY</scope>
    <scope>COFACTOR</scope>
    <scope>BIOPHYSICOCHEMICAL PROPERTIES</scope>
    <scope>TISSUE SPECIFICITY</scope>
</reference>
<reference key="7">
    <citation type="journal article" date="2008" name="J. Proteome Res.">
        <title>Phosphoproteome analysis of Drosophila melanogaster embryos.</title>
        <authorList>
            <person name="Zhai B."/>
            <person name="Villen J."/>
            <person name="Beausoleil S.A."/>
            <person name="Mintseris J."/>
            <person name="Gygi S.P."/>
        </authorList>
    </citation>
    <scope>PHOSPHORYLATION [LARGE SCALE ANALYSIS] AT SER-116</scope>
    <scope>IDENTIFICATION BY MASS SPECTROMETRY</scope>
    <source>
        <tissue>Embryo</tissue>
    </source>
</reference>
<reference key="8">
    <citation type="journal article" date="2015" name="Cell Metab.">
        <title>Glial Glycolysis Is Essential for Neuronal Survival in Drosophila.</title>
        <authorList>
            <person name="Volkenhoff A."/>
            <person name="Weiler A."/>
            <person name="Letzel M."/>
            <person name="Stehling M."/>
            <person name="Klaembt C."/>
            <person name="Schirmeier S."/>
        </authorList>
    </citation>
    <scope>FUNCTION</scope>
    <scope>DISRUPTION PHENOTYPE</scope>
</reference>
<reference evidence="10" key="9">
    <citation type="journal article" date="2001" name="Genetics">
        <title>Clinal variation for amino acid polymorphisms at the Pgm locus in Drosophila melanogaster.</title>
        <authorList>
            <person name="Verrelli B.C."/>
            <person name="Eanes W.F."/>
        </authorList>
    </citation>
    <scope>CHARACTERIZATION OF VARIANTS THR-9; GLN-17; ASN-28; MET-36; LYS-197; LYS-235; LEU-240; ASP-245; SER-338; MET-341; LYS-346; LYS-351; SER-465; LEU-484 AND THR-530</scope>
</reference>
<reference evidence="10" key="10">
    <citation type="journal article" date="2001" name="Genetics">
        <title>The functional impact of Pgm amino acid polymorphism on glycogen content in Drosophila melanogaster.</title>
        <authorList>
            <person name="Verrelli B.C."/>
            <person name="Eanes W.F."/>
        </authorList>
    </citation>
    <scope>CHARACTERIZATION OF VARIANTS THR-9; MET-36; VAL-52; LEU-240; ASP-245; MET-341; SER-465; LEU-484 AND THR-530</scope>
</reference>
<evidence type="ECO:0000250" key="1">
    <source>
        <dbReference type="UniProtKB" id="P00949"/>
    </source>
</evidence>
<evidence type="ECO:0000269" key="2">
    <source>
    </source>
</evidence>
<evidence type="ECO:0000269" key="3">
    <source>
    </source>
</evidence>
<evidence type="ECO:0000269" key="4">
    <source>
    </source>
</evidence>
<evidence type="ECO:0000269" key="5">
    <source>
    </source>
</evidence>
<evidence type="ECO:0000269" key="6">
    <source>
    </source>
</evidence>
<evidence type="ECO:0000269" key="7">
    <source>
    </source>
</evidence>
<evidence type="ECO:0000269" key="8">
    <source>
    </source>
</evidence>
<evidence type="ECO:0000269" key="9">
    <source>
    </source>
</evidence>
<evidence type="ECO:0000305" key="10"/>
<evidence type="ECO:0000305" key="11">
    <source>
    </source>
</evidence>
<evidence type="ECO:0000312" key="12">
    <source>
        <dbReference type="EMBL" id="AAF49533.1"/>
    </source>
</evidence>
<evidence type="ECO:0000312" key="13">
    <source>
        <dbReference type="EMBL" id="AAG44900.1"/>
    </source>
</evidence>
<evidence type="ECO:0000312" key="14">
    <source>
        <dbReference type="EMBL" id="AAG44901.1"/>
    </source>
</evidence>
<evidence type="ECO:0000312" key="15">
    <source>
        <dbReference type="EMBL" id="AAG44902.1"/>
    </source>
</evidence>
<evidence type="ECO:0000312" key="16">
    <source>
        <dbReference type="EMBL" id="AAG44903.1"/>
    </source>
</evidence>
<evidence type="ECO:0000312" key="17">
    <source>
        <dbReference type="EMBL" id="AAG44904.1"/>
    </source>
</evidence>
<evidence type="ECO:0000312" key="18">
    <source>
        <dbReference type="EMBL" id="AAG44905.1"/>
    </source>
</evidence>
<evidence type="ECO:0000312" key="19">
    <source>
        <dbReference type="EMBL" id="AAG44906.1"/>
    </source>
</evidence>
<evidence type="ECO:0000312" key="20">
    <source>
        <dbReference type="EMBL" id="AAG44907.1"/>
    </source>
</evidence>
<evidence type="ECO:0000312" key="21">
    <source>
        <dbReference type="EMBL" id="AAG44908.1"/>
    </source>
</evidence>
<evidence type="ECO:0000312" key="22">
    <source>
        <dbReference type="EMBL" id="AAG44909.1"/>
    </source>
</evidence>
<evidence type="ECO:0000312" key="23">
    <source>
        <dbReference type="EMBL" id="AAG44910.1"/>
    </source>
</evidence>
<evidence type="ECO:0000312" key="24">
    <source>
        <dbReference type="EMBL" id="AAG44911.1"/>
    </source>
</evidence>
<evidence type="ECO:0000312" key="25">
    <source>
        <dbReference type="EMBL" id="AAG44912.1"/>
    </source>
</evidence>
<evidence type="ECO:0000312" key="26">
    <source>
        <dbReference type="EMBL" id="AAG44913.1"/>
    </source>
</evidence>
<evidence type="ECO:0000312" key="27">
    <source>
        <dbReference type="EMBL" id="AAG44914.1"/>
    </source>
</evidence>
<evidence type="ECO:0000312" key="28">
    <source>
        <dbReference type="EMBL" id="AAG44915.1"/>
    </source>
</evidence>
<evidence type="ECO:0000312" key="29">
    <source>
        <dbReference type="EMBL" id="AAG44916.1"/>
    </source>
</evidence>
<evidence type="ECO:0000312" key="30">
    <source>
        <dbReference type="EMBL" id="AAG44917.1"/>
    </source>
</evidence>
<evidence type="ECO:0000312" key="31">
    <source>
        <dbReference type="EMBL" id="AAG44918.1"/>
    </source>
</evidence>
<evidence type="ECO:0000312" key="32">
    <source>
        <dbReference type="EMBL" id="AAG44919.1"/>
    </source>
</evidence>
<evidence type="ECO:0000312" key="33">
    <source>
        <dbReference type="EMBL" id="AAG44920.1"/>
    </source>
</evidence>
<evidence type="ECO:0000312" key="34">
    <source>
        <dbReference type="EMBL" id="AAG44921.1"/>
    </source>
</evidence>
<evidence type="ECO:0000312" key="35">
    <source>
        <dbReference type="EMBL" id="AAG44922.1"/>
    </source>
</evidence>
<evidence type="ECO:0000312" key="36">
    <source>
        <dbReference type="EMBL" id="AAG44923.1"/>
    </source>
</evidence>
<evidence type="ECO:0000312" key="37">
    <source>
        <dbReference type="EMBL" id="AAG44924.1"/>
    </source>
</evidence>
<evidence type="ECO:0000312" key="38">
    <source>
        <dbReference type="EMBL" id="AAG44925.1"/>
    </source>
</evidence>
<evidence type="ECO:0000312" key="39">
    <source>
        <dbReference type="EMBL" id="AAG44926.1"/>
    </source>
</evidence>
<evidence type="ECO:0000312" key="40">
    <source>
        <dbReference type="EMBL" id="AAG44927.1"/>
    </source>
</evidence>
<evidence type="ECO:0000312" key="41">
    <source>
        <dbReference type="EMBL" id="AAG44928.1"/>
    </source>
</evidence>
<evidence type="ECO:0000312" key="42">
    <source>
        <dbReference type="EMBL" id="AAG44929.1"/>
    </source>
</evidence>
<evidence type="ECO:0000312" key="43">
    <source>
        <dbReference type="EMBL" id="AAG44930.1"/>
    </source>
</evidence>
<evidence type="ECO:0000312" key="44">
    <source>
        <dbReference type="EMBL" id="AAG44931.1"/>
    </source>
</evidence>
<evidence type="ECO:0000312" key="45">
    <source>
        <dbReference type="EMBL" id="AAG44932.1"/>
    </source>
</evidence>
<evidence type="ECO:0000312" key="46">
    <source>
        <dbReference type="EMBL" id="AAG44933.1"/>
    </source>
</evidence>
<evidence type="ECO:0000312" key="47">
    <source>
        <dbReference type="EMBL" id="AAG44934.1"/>
    </source>
</evidence>
<evidence type="ECO:0000312" key="48">
    <source>
        <dbReference type="EMBL" id="AAG44935.1"/>
    </source>
</evidence>
<evidence type="ECO:0000312" key="49">
    <source>
        <dbReference type="EMBL" id="AAG44936.1"/>
    </source>
</evidence>
<evidence type="ECO:0000312" key="50">
    <source>
        <dbReference type="EMBL" id="AAG44937.1"/>
    </source>
</evidence>
<evidence type="ECO:0000312" key="51">
    <source>
        <dbReference type="EMBL" id="AAG44938.1"/>
    </source>
</evidence>
<evidence type="ECO:0000312" key="52">
    <source>
        <dbReference type="EMBL" id="AAG44939.1"/>
    </source>
</evidence>
<evidence type="ECO:0000312" key="53">
    <source>
        <dbReference type="EMBL" id="AAG44940.1"/>
    </source>
</evidence>
<evidence type="ECO:0000312" key="54">
    <source>
        <dbReference type="EMBL" id="AAG44941.1"/>
    </source>
</evidence>
<evidence type="ECO:0000312" key="55">
    <source>
        <dbReference type="EMBL" id="AAG44942.1"/>
    </source>
</evidence>
<evidence type="ECO:0000312" key="56">
    <source>
        <dbReference type="EMBL" id="AAG44943.1"/>
    </source>
</evidence>
<evidence type="ECO:0000312" key="57">
    <source>
        <dbReference type="EMBL" id="AAL08565.1"/>
    </source>
</evidence>
<evidence type="ECO:0000312" key="58">
    <source>
        <dbReference type="EMBL" id="AAL08568.1"/>
    </source>
</evidence>
<evidence type="ECO:0000312" key="59">
    <source>
        <dbReference type="EMBL" id="AAQ22512.1"/>
    </source>
</evidence>
<evidence type="ECO:0000312" key="60">
    <source>
        <dbReference type="FlyBase" id="FBgn0003076"/>
    </source>
</evidence>
<evidence type="ECO:0000312" key="61">
    <source>
        <dbReference type="Proteomes" id="UP000000803"/>
    </source>
</evidence>
<accession>Q9VUY9</accession>
<accession>Q95VC1</accession>
<accession>Q9GN12</accession>
<accession>Q9GN65</accession>
<accession>Q9GN80</accession>
<accession>Q9GN99</accession>
<accession>Q9GNA0</accession>
<accession>Q9GNH5</accession>
<accession>Q9GNJ1</accession>
<accession>Q9GQ71</accession>
<accession>Q9GQ72</accession>
<accession>Q9GQ73</accession>
<accession>Q9GQ74</accession>
<accession>Q9GQ75</accession>
<accession>Q9GQ76</accession>
<accession>Q9GQ77</accession>
<accession>Q9GQ78</accession>
<accession>Q9GQ79</accession>
<accession>Q9GQ80</accession>
<sequence length="560" mass="60766">MSLTVEIVATKPYEGQKPGTSGLRKKVKVFTQPNYTENFVQAILEANGAALAGSTLVVGGDGRFYCKEAAELIVRLSAANGVSKLLVGQNGILSTPAVSSLIRHNKALGGIVLTASHNPGGPENDFGIKFNCENGGPAPDAFTNHIYKITTEIKEYKLVRNLQIDISKVGVTSFDIAGKPFTVEVIDSVANYVRHMEEIFDFAKLKDFVSGKATGKPLKMRIDAMNGVTGSYVREIFLNRLGATESSVVHTTPLPDFGGLHPDPNLTYAKDLVDTVAQGDYDIGAAFDGDGDRNMIIGSKAFFVTPSDSLAVIAHYLEAIPYFQKNGVQGFARSMPTASAVDLVGRKLGKEVFEVPTGWKYFGNLMDAGRLCLCGEESFGTGSNHIREKDGIWAVLAWISVMQHTGKGIEDILKQHWSVYGRNYFTRYDYEECASDPCNEMVATMEKTITAPEFVGKSYSSGGKTYKVKEADNFSYTDPVDKSVATKQGLRIVFEDGSRIVVRLSGTGSSGATVRLYIDSYEKENVLGQASVMLKPLIDIALEISQLPKFTGRNAPTVIT</sequence>
<gene>
    <name evidence="60" type="primary">Pgm1</name>
    <name evidence="60" type="ORF">CG5165</name>
</gene>
<organism evidence="61">
    <name type="scientific">Drosophila melanogaster</name>
    <name type="common">Fruit fly</name>
    <dbReference type="NCBI Taxonomy" id="7227"/>
    <lineage>
        <taxon>Eukaryota</taxon>
        <taxon>Metazoa</taxon>
        <taxon>Ecdysozoa</taxon>
        <taxon>Arthropoda</taxon>
        <taxon>Hexapoda</taxon>
        <taxon>Insecta</taxon>
        <taxon>Pterygota</taxon>
        <taxon>Neoptera</taxon>
        <taxon>Endopterygota</taxon>
        <taxon>Diptera</taxon>
        <taxon>Brachycera</taxon>
        <taxon>Muscomorpha</taxon>
        <taxon>Ephydroidea</taxon>
        <taxon>Drosophilidae</taxon>
        <taxon>Drosophila</taxon>
        <taxon>Sophophora</taxon>
    </lineage>
</organism>
<proteinExistence type="evidence at protein level"/>
<feature type="chain" id="PRO_0000147789" description="Phosphoglucomutase 1">
    <location>
        <begin position="1"/>
        <end position="560"/>
    </location>
</feature>
<feature type="active site" description="Phosphoserine intermediate" evidence="1">
    <location>
        <position position="116"/>
    </location>
</feature>
<feature type="binding site" evidence="1">
    <location>
        <position position="24"/>
    </location>
    <ligand>
        <name>alpha-D-glucose 1,6-bisphosphate</name>
        <dbReference type="ChEBI" id="CHEBI:58392"/>
    </ligand>
</feature>
<feature type="binding site" evidence="1">
    <location>
        <position position="116"/>
    </location>
    <ligand>
        <name>alpha-D-glucose 1,6-bisphosphate</name>
        <dbReference type="ChEBI" id="CHEBI:58392"/>
    </ligand>
</feature>
<feature type="binding site" description="via phosphate group" evidence="1">
    <location>
        <position position="116"/>
    </location>
    <ligand>
        <name>Mg(2+)</name>
        <dbReference type="ChEBI" id="CHEBI:18420"/>
    </ligand>
</feature>
<feature type="binding site" evidence="1">
    <location>
        <position position="288"/>
    </location>
    <ligand>
        <name>Mg(2+)</name>
        <dbReference type="ChEBI" id="CHEBI:18420"/>
    </ligand>
</feature>
<feature type="binding site" evidence="1">
    <location>
        <position position="290"/>
    </location>
    <ligand>
        <name>Mg(2+)</name>
        <dbReference type="ChEBI" id="CHEBI:18420"/>
    </ligand>
</feature>
<feature type="binding site" evidence="1">
    <location>
        <position position="292"/>
    </location>
    <ligand>
        <name>alpha-D-glucose 1,6-bisphosphate</name>
        <dbReference type="ChEBI" id="CHEBI:58392"/>
    </ligand>
</feature>
<feature type="binding site" evidence="1">
    <location>
        <position position="292"/>
    </location>
    <ligand>
        <name>Mg(2+)</name>
        <dbReference type="ChEBI" id="CHEBI:18420"/>
    </ligand>
</feature>
<feature type="binding site" evidence="1">
    <location>
        <position position="293"/>
    </location>
    <ligand>
        <name>alpha-D-glucose 1,6-bisphosphate</name>
        <dbReference type="ChEBI" id="CHEBI:58392"/>
    </ligand>
</feature>
<feature type="binding site" evidence="1">
    <location>
        <position position="357"/>
    </location>
    <ligand>
        <name>alpha-D-glucose 1,6-bisphosphate</name>
        <dbReference type="ChEBI" id="CHEBI:58392"/>
    </ligand>
</feature>
<feature type="binding site" evidence="1">
    <location>
        <position position="376"/>
    </location>
    <ligand>
        <name>alpha-D-glucose 1,6-bisphosphate</name>
        <dbReference type="ChEBI" id="CHEBI:58392"/>
    </ligand>
</feature>
<feature type="binding site" evidence="1">
    <location>
        <position position="378"/>
    </location>
    <ligand>
        <name>alpha-D-glucose 1,6-bisphosphate</name>
        <dbReference type="ChEBI" id="CHEBI:58392"/>
    </ligand>
</feature>
<feature type="binding site" evidence="1">
    <location>
        <position position="389"/>
    </location>
    <ligand>
        <name>alpha-D-glucose 1,6-bisphosphate</name>
        <dbReference type="ChEBI" id="CHEBI:58392"/>
    </ligand>
</feature>
<feature type="modified residue" description="Phosphoserine" evidence="7">
    <location>
        <position position="116"/>
    </location>
</feature>
<feature type="sequence variant" evidence="6">
    <original>E</original>
    <variation>G</variation>
    <location>
        <position position="6"/>
    </location>
</feature>
<feature type="sequence variant" description="In strain: dpf95_94.1 and zim_26H." evidence="3 4 5 6">
    <original>A</original>
    <variation>T</variation>
    <location>
        <position position="9"/>
    </location>
</feature>
<feature type="sequence variant" evidence="4">
    <original>K</original>
    <variation>Q</variation>
    <location>
        <position position="17"/>
    </location>
</feature>
<feature type="sequence variant" evidence="4">
    <original>K</original>
    <variation>N</variation>
    <location>
        <position position="28"/>
    </location>
</feature>
<feature type="sequence variant" evidence="4 5">
    <original>T</original>
    <variation>M</variation>
    <location>
        <position position="36"/>
    </location>
</feature>
<feature type="sequence variant" description="In strain: zim_38H." evidence="3">
    <original>A</original>
    <variation>V</variation>
    <location>
        <position position="50"/>
    </location>
</feature>
<feature type="sequence variant" description="In strain: zim_36H." evidence="3 5">
    <original>A</original>
    <variation>I</variation>
    <location>
        <position position="52"/>
    </location>
</feature>
<feature type="sequence variant" description="In strain: dpf95_48.2, dpf95_100.3 and hfl97_93.0." evidence="3 5">
    <original>A</original>
    <variation>V</variation>
    <location>
        <position position="52"/>
    </location>
</feature>
<feature type="sequence variant" description="In strain: zim_36H." evidence="3">
    <original>F</original>
    <variation>Y</variation>
    <location>
        <position position="64"/>
    </location>
</feature>
<feature type="sequence variant" description="In strain: B4039." evidence="3">
    <original>G</original>
    <variation>A</variation>
    <location>
        <position position="109"/>
    </location>
</feature>
<feature type="sequence variant" description="In strain: dpf95_56.1." evidence="3 4">
    <original>E</original>
    <variation>K</variation>
    <location>
        <position position="197"/>
    </location>
</feature>
<feature type="sequence variant" description="In strain: dpf95_13.0." evidence="3 4">
    <original>E</original>
    <variation>K</variation>
    <location>
        <position position="235"/>
    </location>
</feature>
<feature type="sequence variant" description="In strain: dpf95_38.3 and dpf95_4.2." evidence="3 4 5 6">
    <original>R</original>
    <variation>L</variation>
    <location>
        <position position="240"/>
    </location>
</feature>
<feature type="sequence variant" description="In strain: dpf95_38.3 and dpf95_4.2." evidence="3 4 5 6">
    <original>E</original>
    <variation>D</variation>
    <location>
        <position position="245"/>
    </location>
</feature>
<feature type="sequence variant" description="In strain: dpf95_36.4." evidence="3 4">
    <original>A</original>
    <variation>S</variation>
    <location>
        <position position="338"/>
    </location>
</feature>
<feature type="sequence variant" description="In strain: B4039, dpf95_77.4 and dpf95_90.2." evidence="3 4 5">
    <original>V</original>
    <variation>M</variation>
    <location>
        <position position="341"/>
    </location>
</feature>
<feature type="sequence variant" description="In strain: dpf95_90.2, hfl97_1.0, hfl97_13.0, hfl97_15.0, hfl97_50.0, md90_709.1, zim_36H and zim_39H." evidence="3 4">
    <original>R</original>
    <variation>K</variation>
    <location>
        <position position="346"/>
    </location>
</feature>
<feature type="sequence variant" evidence="4">
    <original>E</original>
    <variation>K</variation>
    <location>
        <position position="351"/>
    </location>
</feature>
<feature type="sequence variant" description="In strain: dpf95_29.3." evidence="3 4 5">
    <original>T</original>
    <variation>S</variation>
    <location>
        <position position="465"/>
    </location>
</feature>
<feature type="sequence variant" description="In strain: dpf95_38.3, dpf95_4.2, dpf95_44.3, dpf95_48.2, dpf95_53.1, dpf95_56.1, dpf95_85.1, hfl97_1.0, hfl97_13.0, hfl97_15.0, hfl97_50.0, hfl97_93.0, md90_709.1, zim_11S, zim_23H, zim_35S, zim_36H, zim_38H, zim_39H, zim_44H, zim_48S and zim_49S." evidence="3 4 5">
    <original>V</original>
    <variation>L</variation>
    <location>
        <position position="484"/>
    </location>
</feature>
<feature type="sequence variant" description="In strain: dpf95_44.3, dpf95_53.1 and dpf95_85.1." evidence="3 4 5">
    <original>A</original>
    <variation>T</variation>
    <location>
        <position position="530"/>
    </location>
</feature>
<feature type="sequence variant" description="In strain: zim_48S." evidence="3">
    <original>I</original>
    <variation>F</variation>
    <location>
        <position position="540"/>
    </location>
</feature>
<protein>
    <recommendedName>
        <fullName evidence="60">Phosphoglucomutase 1</fullName>
        <shortName>PGM</shortName>
        <ecNumber evidence="9">5.4.2.2</ecNumber>
    </recommendedName>
    <alternativeName>
        <fullName>Glucose phosphomutase</fullName>
    </alternativeName>
</protein>
<keyword id="KW-0119">Carbohydrate metabolism</keyword>
<keyword id="KW-0313">Glucose metabolism</keyword>
<keyword id="KW-0413">Isomerase</keyword>
<keyword id="KW-0460">Magnesium</keyword>
<keyword id="KW-0479">Metal-binding</keyword>
<keyword id="KW-0597">Phosphoprotein</keyword>
<keyword id="KW-1185">Reference proteome</keyword>
<name>PGM_DROME</name>
<dbReference type="EC" id="5.4.2.2" evidence="9"/>
<dbReference type="EMBL" id="AF290313">
    <property type="protein sequence ID" value="AAG44900.1"/>
    <property type="molecule type" value="Genomic_DNA"/>
</dbReference>
<dbReference type="EMBL" id="AF290314">
    <property type="protein sequence ID" value="AAG44901.1"/>
    <property type="molecule type" value="Genomic_DNA"/>
</dbReference>
<dbReference type="EMBL" id="AF290315">
    <property type="protein sequence ID" value="AAG44902.1"/>
    <property type="molecule type" value="Genomic_DNA"/>
</dbReference>
<dbReference type="EMBL" id="AF290316">
    <property type="protein sequence ID" value="AAG44903.1"/>
    <property type="molecule type" value="Genomic_DNA"/>
</dbReference>
<dbReference type="EMBL" id="AF290317">
    <property type="protein sequence ID" value="AAG44904.1"/>
    <property type="molecule type" value="Genomic_DNA"/>
</dbReference>
<dbReference type="EMBL" id="AF290318">
    <property type="protein sequence ID" value="AAG44905.1"/>
    <property type="molecule type" value="Genomic_DNA"/>
</dbReference>
<dbReference type="EMBL" id="AF290319">
    <property type="protein sequence ID" value="AAG44906.1"/>
    <property type="molecule type" value="Genomic_DNA"/>
</dbReference>
<dbReference type="EMBL" id="AF290320">
    <property type="protein sequence ID" value="AAG44907.1"/>
    <property type="molecule type" value="Genomic_DNA"/>
</dbReference>
<dbReference type="EMBL" id="AF290321">
    <property type="protein sequence ID" value="AAG44908.1"/>
    <property type="molecule type" value="Genomic_DNA"/>
</dbReference>
<dbReference type="EMBL" id="AF290322">
    <property type="protein sequence ID" value="AAG44909.1"/>
    <property type="molecule type" value="Genomic_DNA"/>
</dbReference>
<dbReference type="EMBL" id="AF290323">
    <property type="protein sequence ID" value="AAG44910.1"/>
    <property type="molecule type" value="Genomic_DNA"/>
</dbReference>
<dbReference type="EMBL" id="AF290324">
    <property type="protein sequence ID" value="AAG44911.1"/>
    <property type="molecule type" value="Genomic_DNA"/>
</dbReference>
<dbReference type="EMBL" id="AF290325">
    <property type="protein sequence ID" value="AAG44912.1"/>
    <property type="molecule type" value="Genomic_DNA"/>
</dbReference>
<dbReference type="EMBL" id="AF290326">
    <property type="protein sequence ID" value="AAG44913.1"/>
    <property type="molecule type" value="Genomic_DNA"/>
</dbReference>
<dbReference type="EMBL" id="AF290327">
    <property type="protein sequence ID" value="AAG44914.1"/>
    <property type="molecule type" value="Genomic_DNA"/>
</dbReference>
<dbReference type="EMBL" id="AF290328">
    <property type="protein sequence ID" value="AAG44915.1"/>
    <property type="molecule type" value="Genomic_DNA"/>
</dbReference>
<dbReference type="EMBL" id="AF290329">
    <property type="protein sequence ID" value="AAG44916.1"/>
    <property type="molecule type" value="Genomic_DNA"/>
</dbReference>
<dbReference type="EMBL" id="AF290330">
    <property type="protein sequence ID" value="AAG44917.1"/>
    <property type="molecule type" value="Genomic_DNA"/>
</dbReference>
<dbReference type="EMBL" id="AF290331">
    <property type="protein sequence ID" value="AAG44918.1"/>
    <property type="molecule type" value="Genomic_DNA"/>
</dbReference>
<dbReference type="EMBL" id="AF290332">
    <property type="protein sequence ID" value="AAG44919.1"/>
    <property type="molecule type" value="Genomic_DNA"/>
</dbReference>
<dbReference type="EMBL" id="AF290333">
    <property type="protein sequence ID" value="AAG44920.1"/>
    <property type="molecule type" value="Genomic_DNA"/>
</dbReference>
<dbReference type="EMBL" id="AF290334">
    <property type="protein sequence ID" value="AAG44921.1"/>
    <property type="molecule type" value="Genomic_DNA"/>
</dbReference>
<dbReference type="EMBL" id="AF290335">
    <property type="protein sequence ID" value="AAG44922.1"/>
    <property type="molecule type" value="Genomic_DNA"/>
</dbReference>
<dbReference type="EMBL" id="AF290336">
    <property type="protein sequence ID" value="AAG44923.1"/>
    <property type="molecule type" value="Genomic_DNA"/>
</dbReference>
<dbReference type="EMBL" id="AF290337">
    <property type="protein sequence ID" value="AAG44924.1"/>
    <property type="molecule type" value="Genomic_DNA"/>
</dbReference>
<dbReference type="EMBL" id="AF290338">
    <property type="protein sequence ID" value="AAG44925.1"/>
    <property type="molecule type" value="Genomic_DNA"/>
</dbReference>
<dbReference type="EMBL" id="AF290339">
    <property type="protein sequence ID" value="AAG44926.1"/>
    <property type="molecule type" value="Genomic_DNA"/>
</dbReference>
<dbReference type="EMBL" id="AF290340">
    <property type="protein sequence ID" value="AAG44927.1"/>
    <property type="molecule type" value="Genomic_DNA"/>
</dbReference>
<dbReference type="EMBL" id="AF290341">
    <property type="protein sequence ID" value="AAG44928.1"/>
    <property type="molecule type" value="Genomic_DNA"/>
</dbReference>
<dbReference type="EMBL" id="AF290342">
    <property type="protein sequence ID" value="AAG44929.1"/>
    <property type="molecule type" value="Genomic_DNA"/>
</dbReference>
<dbReference type="EMBL" id="AF290343">
    <property type="protein sequence ID" value="AAG44930.1"/>
    <property type="molecule type" value="Genomic_DNA"/>
</dbReference>
<dbReference type="EMBL" id="AF290344">
    <property type="protein sequence ID" value="AAG44931.1"/>
    <property type="molecule type" value="Genomic_DNA"/>
</dbReference>
<dbReference type="EMBL" id="AF290345">
    <property type="protein sequence ID" value="AAG44932.1"/>
    <property type="molecule type" value="Genomic_DNA"/>
</dbReference>
<dbReference type="EMBL" id="AF290346">
    <property type="protein sequence ID" value="AAG44933.1"/>
    <property type="molecule type" value="Genomic_DNA"/>
</dbReference>
<dbReference type="EMBL" id="AF290347">
    <property type="protein sequence ID" value="AAG44934.1"/>
    <property type="molecule type" value="Genomic_DNA"/>
</dbReference>
<dbReference type="EMBL" id="AF290348">
    <property type="protein sequence ID" value="AAG44935.1"/>
    <property type="molecule type" value="Genomic_DNA"/>
</dbReference>
<dbReference type="EMBL" id="AF290349">
    <property type="protein sequence ID" value="AAG44936.1"/>
    <property type="molecule type" value="Genomic_DNA"/>
</dbReference>
<dbReference type="EMBL" id="AF290350">
    <property type="protein sequence ID" value="AAG44937.1"/>
    <property type="molecule type" value="Genomic_DNA"/>
</dbReference>
<dbReference type="EMBL" id="AF290351">
    <property type="protein sequence ID" value="AAG44938.1"/>
    <property type="molecule type" value="Genomic_DNA"/>
</dbReference>
<dbReference type="EMBL" id="AF290352">
    <property type="protein sequence ID" value="AAG44939.1"/>
    <property type="molecule type" value="Genomic_DNA"/>
</dbReference>
<dbReference type="EMBL" id="AF290353">
    <property type="protein sequence ID" value="AAG44940.1"/>
    <property type="molecule type" value="Genomic_DNA"/>
</dbReference>
<dbReference type="EMBL" id="AF290354">
    <property type="protein sequence ID" value="AAG44941.1"/>
    <property type="molecule type" value="Genomic_DNA"/>
</dbReference>
<dbReference type="EMBL" id="AF290355">
    <property type="protein sequence ID" value="AAG44942.1"/>
    <property type="molecule type" value="Genomic_DNA"/>
</dbReference>
<dbReference type="EMBL" id="AF290356">
    <property type="protein sequence ID" value="AAG44943.1"/>
    <property type="molecule type" value="Genomic_DNA"/>
</dbReference>
<dbReference type="EMBL" id="AF416981">
    <property type="protein sequence ID" value="AAL08565.1"/>
    <property type="molecule type" value="mRNA"/>
</dbReference>
<dbReference type="EMBL" id="AF416982">
    <property type="protein sequence ID" value="AAL08566.1"/>
    <property type="molecule type" value="mRNA"/>
</dbReference>
<dbReference type="EMBL" id="AF416983">
    <property type="protein sequence ID" value="AAL08567.1"/>
    <property type="molecule type" value="mRNA"/>
</dbReference>
<dbReference type="EMBL" id="AF416984">
    <property type="protein sequence ID" value="AAL08568.1"/>
    <property type="molecule type" value="mRNA"/>
</dbReference>
<dbReference type="EMBL" id="AE014296">
    <property type="protein sequence ID" value="AAF49533.1"/>
    <property type="molecule type" value="Genomic_DNA"/>
</dbReference>
<dbReference type="EMBL" id="BT010043">
    <property type="protein sequence ID" value="AAQ22512.1"/>
    <property type="molecule type" value="mRNA"/>
</dbReference>
<dbReference type="RefSeq" id="NP_524675.1">
    <property type="nucleotide sequence ID" value="NM_079936.3"/>
</dbReference>
<dbReference type="SMR" id="Q9VUY9"/>
<dbReference type="BioGRID" id="68773">
    <property type="interactions" value="6"/>
</dbReference>
<dbReference type="FunCoup" id="Q9VUY9">
    <property type="interactions" value="691"/>
</dbReference>
<dbReference type="IntAct" id="Q9VUY9">
    <property type="interactions" value="8"/>
</dbReference>
<dbReference type="STRING" id="7227.FBpp0075247"/>
<dbReference type="GlyGen" id="Q9VUY9">
    <property type="glycosylation" value="1 site"/>
</dbReference>
<dbReference type="iPTMnet" id="Q9VUY9"/>
<dbReference type="PaxDb" id="7227-FBpp0075247"/>
<dbReference type="DNASU" id="44010"/>
<dbReference type="EnsemblMetazoa" id="FBtr0075492">
    <property type="protein sequence ID" value="FBpp0075247"/>
    <property type="gene ID" value="FBgn0003076"/>
</dbReference>
<dbReference type="GeneID" id="44010"/>
<dbReference type="KEGG" id="dme:Dmel_CG5165"/>
<dbReference type="AGR" id="FB:FBgn0003076"/>
<dbReference type="CTD" id="5236"/>
<dbReference type="FlyBase" id="FBgn0003076">
    <property type="gene designation" value="Pgm1"/>
</dbReference>
<dbReference type="VEuPathDB" id="VectorBase:FBgn0003076"/>
<dbReference type="eggNOG" id="KOG0625">
    <property type="taxonomic scope" value="Eukaryota"/>
</dbReference>
<dbReference type="GeneTree" id="ENSGT00940000173602"/>
<dbReference type="HOGENOM" id="CLU_009330_0_1_1"/>
<dbReference type="InParanoid" id="Q9VUY9"/>
<dbReference type="OMA" id="WIQDRAN"/>
<dbReference type="OrthoDB" id="2291at2759"/>
<dbReference type="PhylomeDB" id="Q9VUY9"/>
<dbReference type="Reactome" id="R-DME-3322077">
    <property type="pathway name" value="Glycogen synthesis"/>
</dbReference>
<dbReference type="Reactome" id="R-DME-6798695">
    <property type="pathway name" value="Neutrophil degranulation"/>
</dbReference>
<dbReference type="Reactome" id="R-DME-70221">
    <property type="pathway name" value="Glycogen breakdown (glycogenolysis)"/>
</dbReference>
<dbReference type="Reactome" id="R-DME-70370">
    <property type="pathway name" value="Galactose catabolism"/>
</dbReference>
<dbReference type="SABIO-RK" id="Q9VUY9"/>
<dbReference type="SignaLink" id="Q9VUY9"/>
<dbReference type="BioGRID-ORCS" id="44010">
    <property type="hits" value="0 hits in 3 CRISPR screens"/>
</dbReference>
<dbReference type="ChiTaRS" id="Pgm">
    <property type="organism name" value="fly"/>
</dbReference>
<dbReference type="GenomeRNAi" id="44010"/>
<dbReference type="PRO" id="PR:Q9VUY9"/>
<dbReference type="Proteomes" id="UP000000803">
    <property type="component" value="Chromosome 3L"/>
</dbReference>
<dbReference type="Bgee" id="FBgn0003076">
    <property type="expression patterns" value="Expressed in capitellum (Drosophila) and 187 other cell types or tissues"/>
</dbReference>
<dbReference type="GO" id="GO:0005829">
    <property type="term" value="C:cytosol"/>
    <property type="evidence" value="ECO:0000318"/>
    <property type="project" value="GO_Central"/>
</dbReference>
<dbReference type="GO" id="GO:0000287">
    <property type="term" value="F:magnesium ion binding"/>
    <property type="evidence" value="ECO:0007669"/>
    <property type="project" value="InterPro"/>
</dbReference>
<dbReference type="GO" id="GO:0004614">
    <property type="term" value="F:phosphoglucomutase activity"/>
    <property type="evidence" value="ECO:0000314"/>
    <property type="project" value="FlyBase"/>
</dbReference>
<dbReference type="GO" id="GO:0005975">
    <property type="term" value="P:carbohydrate metabolic process"/>
    <property type="evidence" value="ECO:0000318"/>
    <property type="project" value="GO_Central"/>
</dbReference>
<dbReference type="GO" id="GO:0033499">
    <property type="term" value="P:galactose catabolic process via UDP-galactose, Leloir pathway"/>
    <property type="evidence" value="ECO:0000250"/>
    <property type="project" value="FlyBase"/>
</dbReference>
<dbReference type="GO" id="GO:0019255">
    <property type="term" value="P:glucose 1-phosphate metabolic process"/>
    <property type="evidence" value="ECO:0000314"/>
    <property type="project" value="FlyBase"/>
</dbReference>
<dbReference type="GO" id="GO:0051156">
    <property type="term" value="P:glucose 6-phosphate metabolic process"/>
    <property type="evidence" value="ECO:0000314"/>
    <property type="project" value="FlyBase"/>
</dbReference>
<dbReference type="GO" id="GO:0006006">
    <property type="term" value="P:glucose metabolic process"/>
    <property type="evidence" value="ECO:0007669"/>
    <property type="project" value="UniProtKB-KW"/>
</dbReference>
<dbReference type="GO" id="GO:0005978">
    <property type="term" value="P:glycogen biosynthetic process"/>
    <property type="evidence" value="ECO:0000315"/>
    <property type="project" value="FlyBase"/>
</dbReference>
<dbReference type="GO" id="GO:0005980">
    <property type="term" value="P:glycogen catabolic process"/>
    <property type="evidence" value="ECO:0000315"/>
    <property type="project" value="FlyBase"/>
</dbReference>
<dbReference type="GO" id="GO:0061622">
    <property type="term" value="P:glycolytic process through glucose-1-phosphate"/>
    <property type="evidence" value="ECO:0000315"/>
    <property type="project" value="FlyBase"/>
</dbReference>
<dbReference type="CDD" id="cd03085">
    <property type="entry name" value="PGM1"/>
    <property type="match status" value="1"/>
</dbReference>
<dbReference type="FunFam" id="3.30.310.50:FF:000002">
    <property type="entry name" value="Phosphoglucomutase 5"/>
    <property type="match status" value="1"/>
</dbReference>
<dbReference type="FunFam" id="3.40.120.10:FF:000004">
    <property type="entry name" value="Phosphoglucomutase 5"/>
    <property type="match status" value="1"/>
</dbReference>
<dbReference type="FunFam" id="3.40.120.10:FF:000005">
    <property type="entry name" value="Phosphoglucomutase 5"/>
    <property type="match status" value="1"/>
</dbReference>
<dbReference type="FunFam" id="3.40.120.10:FF:000006">
    <property type="entry name" value="Phosphoglucomutase PgmA"/>
    <property type="match status" value="1"/>
</dbReference>
<dbReference type="Gene3D" id="3.40.120.10">
    <property type="entry name" value="Alpha-D-Glucose-1,6-Bisphosphate, subunit A, domain 3"/>
    <property type="match status" value="3"/>
</dbReference>
<dbReference type="Gene3D" id="3.30.310.50">
    <property type="entry name" value="Alpha-D-phosphohexomutase, C-terminal domain"/>
    <property type="match status" value="1"/>
</dbReference>
<dbReference type="InterPro" id="IPR005844">
    <property type="entry name" value="A-D-PHexomutase_a/b/a-I"/>
</dbReference>
<dbReference type="InterPro" id="IPR016055">
    <property type="entry name" value="A-D-PHexomutase_a/b/a-I/II/III"/>
</dbReference>
<dbReference type="InterPro" id="IPR005845">
    <property type="entry name" value="A-D-PHexomutase_a/b/a-II"/>
</dbReference>
<dbReference type="InterPro" id="IPR005846">
    <property type="entry name" value="A-D-PHexomutase_a/b/a-III"/>
</dbReference>
<dbReference type="InterPro" id="IPR036900">
    <property type="entry name" value="A-D-PHexomutase_C_sf"/>
</dbReference>
<dbReference type="InterPro" id="IPR016066">
    <property type="entry name" value="A-D-PHexomutase_CS"/>
</dbReference>
<dbReference type="InterPro" id="IPR005841">
    <property type="entry name" value="Alpha-D-phosphohexomutase_SF"/>
</dbReference>
<dbReference type="InterPro" id="IPR045244">
    <property type="entry name" value="PGM"/>
</dbReference>
<dbReference type="NCBIfam" id="NF005737">
    <property type="entry name" value="PRK07564.1-1"/>
    <property type="match status" value="1"/>
</dbReference>
<dbReference type="PANTHER" id="PTHR22573:SF2">
    <property type="entry name" value="PHOSPHOGLUCOMUTASE"/>
    <property type="match status" value="1"/>
</dbReference>
<dbReference type="PANTHER" id="PTHR22573">
    <property type="entry name" value="PHOSPHOHEXOMUTASE FAMILY MEMBER"/>
    <property type="match status" value="1"/>
</dbReference>
<dbReference type="Pfam" id="PF24947">
    <property type="entry name" value="PGM1_C_vert_fung"/>
    <property type="match status" value="1"/>
</dbReference>
<dbReference type="Pfam" id="PF02878">
    <property type="entry name" value="PGM_PMM_I"/>
    <property type="match status" value="1"/>
</dbReference>
<dbReference type="Pfam" id="PF02879">
    <property type="entry name" value="PGM_PMM_II"/>
    <property type="match status" value="1"/>
</dbReference>
<dbReference type="Pfam" id="PF02880">
    <property type="entry name" value="PGM_PMM_III"/>
    <property type="match status" value="1"/>
</dbReference>
<dbReference type="PRINTS" id="PR00509">
    <property type="entry name" value="PGMPMM"/>
</dbReference>
<dbReference type="SUPFAM" id="SSF55957">
    <property type="entry name" value="Phosphoglucomutase, C-terminal domain"/>
    <property type="match status" value="1"/>
</dbReference>
<dbReference type="SUPFAM" id="SSF53738">
    <property type="entry name" value="Phosphoglucomutase, first 3 domains"/>
    <property type="match status" value="3"/>
</dbReference>
<dbReference type="PROSITE" id="PS00710">
    <property type="entry name" value="PGM_PMM"/>
    <property type="match status" value="1"/>
</dbReference>
<comment type="function">
    <text evidence="8 9 11">Catalyzes the reversible isomerization of alpha-D-glucose 1-phosphate to alpha-D-glucose 6-phosphate (PubMed:44190). The mechanism proceeds via the intermediate compound alpha-D-glucose 1,6-bisphosphate (PubMed:44190). This enzyme participates in both the breakdown and synthesis of glucose (PubMed:44190). Enzyme of the glycolytic pathway (Probable). Glycolysis is essential in glial cells but not in neurons; neurons rely on the citric acid cycle for their energy needs, and on lactate and alanine secreted into the hemolymph by glial cells to fuel it (PubMed:26235423).</text>
</comment>
<comment type="catalytic activity">
    <reaction evidence="9">
        <text>alpha-D-glucose 1-phosphate = alpha-D-glucose 6-phosphate</text>
        <dbReference type="Rhea" id="RHEA:23536"/>
        <dbReference type="ChEBI" id="CHEBI:58225"/>
        <dbReference type="ChEBI" id="CHEBI:58601"/>
        <dbReference type="EC" id="5.4.2.2"/>
    </reaction>
</comment>
<comment type="catalytic activity">
    <reaction evidence="9">
        <text>O-phospho-L-seryl-[protein] + alpha-D-glucose 1-phosphate = alpha-D-glucose 1,6-bisphosphate + L-seryl-[protein]</text>
        <dbReference type="Rhea" id="RHEA:68748"/>
        <dbReference type="Rhea" id="RHEA-COMP:9863"/>
        <dbReference type="Rhea" id="RHEA-COMP:11604"/>
        <dbReference type="ChEBI" id="CHEBI:29999"/>
        <dbReference type="ChEBI" id="CHEBI:58392"/>
        <dbReference type="ChEBI" id="CHEBI:58601"/>
        <dbReference type="ChEBI" id="CHEBI:83421"/>
    </reaction>
</comment>
<comment type="catalytic activity">
    <reaction evidence="9">
        <text>alpha-D-glucose 1,6-bisphosphate + L-seryl-[protein] = O-phospho-L-seryl-[protein] + alpha-D-glucose 6-phosphate</text>
        <dbReference type="Rhea" id="RHEA:68752"/>
        <dbReference type="Rhea" id="RHEA-COMP:9863"/>
        <dbReference type="Rhea" id="RHEA-COMP:11604"/>
        <dbReference type="ChEBI" id="CHEBI:29999"/>
        <dbReference type="ChEBI" id="CHEBI:58225"/>
        <dbReference type="ChEBI" id="CHEBI:58392"/>
        <dbReference type="ChEBI" id="CHEBI:83421"/>
    </reaction>
</comment>
<comment type="cofactor">
    <cofactor evidence="9">
        <name>Mg(2+)</name>
        <dbReference type="ChEBI" id="CHEBI:18420"/>
    </cofactor>
    <text evidence="9">Binds 1 Mg(2+) ion per subunit.</text>
</comment>
<comment type="biophysicochemical properties">
    <kinetics>
        <KM evidence="9">140 uM for glucose-1-phosphate (for Pgm-A at pH 6.0)</KM>
        <KM evidence="9">158 uM for glucose-1-phosphate (for Pgm-A at pH 7.4)</KM>
        <KM evidence="9">4.4 uM for glucose-1,6-diphosphate (for Pgm-A at pH 6.0)</KM>
        <KM evidence="9">4.4 uM for glucose-1,6-diphosphate (for Pgm-A at pH 7.4)</KM>
        <KM evidence="9">142.2 uM for glucose-1-phosphate (for Pgm-B at pH 6.0)</KM>
        <KM evidence="9">112.4 uM for glucose-1-phosphate (for Pgm-B at pH 7.4)</KM>
        <KM evidence="9">21.7 uM for glucose-1,6-diphosphate (for Pgm-B at pH 6.0)</KM>
        <KM evidence="9">4.2 uM for glucose-1,6-diphosphate (for Pgm-B at pH 7.4)</KM>
        <Vmax evidence="9">32.8 umol/min/mg enzyme toward glucose-1-phosphate (for Pgm-A at pH 6.0)</Vmax>
        <Vmax evidence="9">129.0 umol/min/mg enzyme toward glucose-1-phosphate (for Pgm-A at pH 7.4)</Vmax>
        <Vmax evidence="9">20.8 umol/min/mg enzyme toward glucose-1,6-diphosphate (for Pgm-A at pH 6.0)</Vmax>
        <Vmax evidence="9">111.0 umol/min/mg enzyme toward glucose-1,6-diphosphate (for Pgm-A at pH 7.4)</Vmax>
        <Vmax evidence="9">35.0 umol/min/mg enzyme toward glucose-1-phosphate (for Pgm-B at pH 6.0)</Vmax>
        <Vmax evidence="9">120.9 umol/min/mg enzyme toward glucose-1-phosphate (for Pgm-B at pH 7.4)</Vmax>
        <Vmax evidence="9">14.5 umol/min/mg enzyme toward glucose-1,6-diphosphate (for Pgm-B at pH 6.0)</Vmax>
        <Vmax evidence="9">100.0 umol/min/mg enzyme toward glucose-1,6-diphosphate (for Pgm-B at pH 7.4)</Vmax>
    </kinetics>
    <phDependence>
        <text evidence="9">Optimum pH is 7.4-7.6.</text>
    </phDependence>
    <temperatureDependence>
        <text evidence="9">Pgm-A is more thermostable than Pgm-B.</text>
    </temperatureDependence>
</comment>
<comment type="subunit">
    <text evidence="1">Monomer.</text>
</comment>
<comment type="tissue specificity">
    <text evidence="9">Localized primarily to fat bodies in third instar larvae.</text>
</comment>
<comment type="polymorphism">
    <text>The polymorphisms show clinal variations. There are 2 common electrophoretic variants, Pgm-A and Pgm-B, which differ in their kinetic and stability parameters. Variations in Pgm are associated with differences in enzyme activity and glycogen content.</text>
</comment>
<comment type="disruption phenotype">
    <text evidence="8">RNAi-mediated knockdown is lethal (PubMed:26235423). Glial-specific RNAi-mediated knockdown is viable but eclosed adults present with locomotor defects (PubMed:26235423). Neuronal-specific RNAi-mediated knockdown is viable with no defects (PubMed:26235423).</text>
</comment>
<comment type="similarity">
    <text evidence="9">Belongs to the phosphohexose mutase family.</text>
</comment>